<feature type="chain" id="PRO_0000089394" description="Protein CCC1">
    <location>
        <begin position="1"/>
        <end position="322"/>
    </location>
</feature>
<feature type="topological domain" description="Cytoplasmic" evidence="1">
    <location>
        <begin position="1"/>
        <end position="99"/>
    </location>
</feature>
<feature type="transmembrane region" description="Helical" evidence="1">
    <location>
        <begin position="100"/>
        <end position="120"/>
    </location>
</feature>
<feature type="topological domain" description="Vacuolar" evidence="1">
    <location>
        <begin position="121"/>
        <end position="129"/>
    </location>
</feature>
<feature type="transmembrane region" description="Helical" evidence="1">
    <location>
        <begin position="130"/>
        <end position="150"/>
    </location>
</feature>
<feature type="topological domain" description="Cytoplasmic" evidence="1">
    <location>
        <begin position="151"/>
        <end position="236"/>
    </location>
</feature>
<feature type="transmembrane region" description="Helical" evidence="1">
    <location>
        <begin position="237"/>
        <end position="257"/>
    </location>
</feature>
<feature type="topological domain" description="Vacuolar" evidence="1">
    <location>
        <begin position="258"/>
        <end position="259"/>
    </location>
</feature>
<feature type="transmembrane region" description="Helical" evidence="1">
    <location>
        <begin position="260"/>
        <end position="280"/>
    </location>
</feature>
<feature type="topological domain" description="Cytoplasmic" evidence="1">
    <location>
        <begin position="281"/>
        <end position="300"/>
    </location>
</feature>
<feature type="transmembrane region" description="Helical" evidence="1">
    <location>
        <begin position="301"/>
        <end position="321"/>
    </location>
</feature>
<feature type="topological domain" description="Vacuolar" evidence="1">
    <location>
        <position position="322"/>
    </location>
</feature>
<feature type="region of interest" description="Disordered" evidence="2">
    <location>
        <begin position="19"/>
        <end position="86"/>
    </location>
</feature>
<feature type="compositionally biased region" description="Low complexity" evidence="2">
    <location>
        <begin position="26"/>
        <end position="53"/>
    </location>
</feature>
<feature type="compositionally biased region" description="Polar residues" evidence="2">
    <location>
        <begin position="60"/>
        <end position="70"/>
    </location>
</feature>
<feature type="modified residue" description="Phosphoserine" evidence="12">
    <location>
        <position position="29"/>
    </location>
</feature>
<feature type="modified residue" description="Phosphoserine" evidence="13">
    <location>
        <position position="53"/>
    </location>
</feature>
<feature type="modified residue" description="Phosphoserine" evidence="12 13">
    <location>
        <position position="68"/>
    </location>
</feature>
<feature type="modified residue" description="Phosphoserine" evidence="12 13">
    <location>
        <position position="71"/>
    </location>
</feature>
<feature type="modified residue" description="Phosphoserine" evidence="11 12 13">
    <location>
        <position position="83"/>
    </location>
</feature>
<name>CCC1_YEAST</name>
<keyword id="KW-0333">Golgi apparatus</keyword>
<keyword id="KW-0472">Membrane</keyword>
<keyword id="KW-0597">Phosphoprotein</keyword>
<keyword id="KW-1185">Reference proteome</keyword>
<keyword id="KW-0812">Transmembrane</keyword>
<keyword id="KW-1133">Transmembrane helix</keyword>
<keyword id="KW-0813">Transport</keyword>
<keyword id="KW-0926">Vacuole</keyword>
<proteinExistence type="evidence at protein level"/>
<reference key="1">
    <citation type="journal article" date="1994" name="Yeast">
        <title>Sequence, mapping and disruption of CCC1, a gene that cross-complements the Ca(2+)-sensitive phenotype of csg1 mutants.</title>
        <authorList>
            <person name="Fu D."/>
            <person name="Beeler T.J."/>
            <person name="Dunn T.M."/>
        </authorList>
    </citation>
    <scope>NUCLEOTIDE SEQUENCE [MRNA]</scope>
</reference>
<reference key="2">
    <citation type="journal article" date="1997" name="Nature">
        <title>The nucleotide sequence of Saccharomyces cerevisiae chromosome XII.</title>
        <authorList>
            <person name="Johnston M."/>
            <person name="Hillier L.W."/>
            <person name="Riles L."/>
            <person name="Albermann K."/>
            <person name="Andre B."/>
            <person name="Ansorge W."/>
            <person name="Benes V."/>
            <person name="Brueckner M."/>
            <person name="Delius H."/>
            <person name="Dubois E."/>
            <person name="Duesterhoeft A."/>
            <person name="Entian K.-D."/>
            <person name="Floeth M."/>
            <person name="Goffeau A."/>
            <person name="Hebling U."/>
            <person name="Heumann K."/>
            <person name="Heuss-Neitzel D."/>
            <person name="Hilbert H."/>
            <person name="Hilger F."/>
            <person name="Kleine K."/>
            <person name="Koetter P."/>
            <person name="Louis E.J."/>
            <person name="Messenguy F."/>
            <person name="Mewes H.-W."/>
            <person name="Miosga T."/>
            <person name="Moestl D."/>
            <person name="Mueller-Auer S."/>
            <person name="Nentwich U."/>
            <person name="Obermaier B."/>
            <person name="Piravandi E."/>
            <person name="Pohl T.M."/>
            <person name="Portetelle D."/>
            <person name="Purnelle B."/>
            <person name="Rechmann S."/>
            <person name="Rieger M."/>
            <person name="Rinke M."/>
            <person name="Rose M."/>
            <person name="Scharfe M."/>
            <person name="Scherens B."/>
            <person name="Scholler P."/>
            <person name="Schwager C."/>
            <person name="Schwarz S."/>
            <person name="Underwood A.P."/>
            <person name="Urrestarazu L.A."/>
            <person name="Vandenbol M."/>
            <person name="Verhasselt P."/>
            <person name="Vierendeels F."/>
            <person name="Voet M."/>
            <person name="Volckaert G."/>
            <person name="Voss H."/>
            <person name="Wambutt R."/>
            <person name="Wedler E."/>
            <person name="Wedler H."/>
            <person name="Zimmermann F.K."/>
            <person name="Zollner A."/>
            <person name="Hani J."/>
            <person name="Hoheisel J.D."/>
        </authorList>
    </citation>
    <scope>NUCLEOTIDE SEQUENCE [LARGE SCALE GENOMIC DNA]</scope>
    <source>
        <strain>ATCC 204508 / S288c</strain>
    </source>
</reference>
<reference key="3">
    <citation type="journal article" date="2014" name="G3 (Bethesda)">
        <title>The reference genome sequence of Saccharomyces cerevisiae: Then and now.</title>
        <authorList>
            <person name="Engel S.R."/>
            <person name="Dietrich F.S."/>
            <person name="Fisk D.G."/>
            <person name="Binkley G."/>
            <person name="Balakrishnan R."/>
            <person name="Costanzo M.C."/>
            <person name="Dwight S.S."/>
            <person name="Hitz B.C."/>
            <person name="Karra K."/>
            <person name="Nash R.S."/>
            <person name="Weng S."/>
            <person name="Wong E.D."/>
            <person name="Lloyd P."/>
            <person name="Skrzypek M.S."/>
            <person name="Miyasato S.R."/>
            <person name="Simison M."/>
            <person name="Cherry J.M."/>
        </authorList>
    </citation>
    <scope>GENOME REANNOTATION</scope>
    <source>
        <strain>ATCC 204508 / S288c</strain>
    </source>
</reference>
<reference key="4">
    <citation type="journal article" date="2007" name="Genome Res.">
        <title>Approaching a complete repository of sequence-verified protein-encoding clones for Saccharomyces cerevisiae.</title>
        <authorList>
            <person name="Hu Y."/>
            <person name="Rolfs A."/>
            <person name="Bhullar B."/>
            <person name="Murthy T.V.S."/>
            <person name="Zhu C."/>
            <person name="Berger M.F."/>
            <person name="Camargo A.A."/>
            <person name="Kelley F."/>
            <person name="McCarron S."/>
            <person name="Jepson D."/>
            <person name="Richardson A."/>
            <person name="Raphael J."/>
            <person name="Moreira D."/>
            <person name="Taycher E."/>
            <person name="Zuo D."/>
            <person name="Mohr S."/>
            <person name="Kane M.F."/>
            <person name="Williamson J."/>
            <person name="Simpson A.J.G."/>
            <person name="Bulyk M.L."/>
            <person name="Harlow E."/>
            <person name="Marsischky G."/>
            <person name="Kolodner R.D."/>
            <person name="LaBaer J."/>
        </authorList>
    </citation>
    <scope>NUCLEOTIDE SEQUENCE [GENOMIC DNA]</scope>
    <source>
        <strain>ATCC 204508 / S288c</strain>
    </source>
</reference>
<reference key="5">
    <citation type="journal article" date="1996" name="Mol. Cell. Biol.">
        <title>The product of HUM1, a novel yeast gene, is required for vacuolar Ca2+/H+ exchange and is related to mammalian Na+/Ca2+ exchangers.</title>
        <authorList>
            <person name="Pozos T.C."/>
            <person name="Sekler I."/>
            <person name="Cyert M.S."/>
        </authorList>
    </citation>
    <scope>FUNCTION</scope>
    <source>
        <strain>S288c / YPH1</strain>
    </source>
</reference>
<reference key="6">
    <citation type="journal article" date="1996" name="Mol. Microbiol.">
        <title>The role of the Saccharomyces cerevisiae CCC1 gene in the homeostasis of manganese ions.</title>
        <authorList>
            <person name="Lapinskas P.J."/>
            <person name="Lin S.-J."/>
            <person name="Culotta V.C."/>
        </authorList>
    </citation>
    <scope>FUNCTION</scope>
    <scope>SUBCELLULAR LOCATION</scope>
    <scope>DISRUPTION PHENOTYPE</scope>
</reference>
<reference key="7">
    <citation type="journal article" date="2000" name="J. Biol. Chem.">
        <title>CCC1 suppresses mitochondrial damage in the yeast model of Friedreich's ataxia by limiting mitochondrial iron accumulation.</title>
        <authorList>
            <person name="Chen O.S."/>
            <person name="Kaplan J."/>
        </authorList>
    </citation>
    <scope>OVEREXPRESSION PHENOTYPE</scope>
</reference>
<reference key="8">
    <citation type="journal article" date="2001" name="J. Biol. Chem.">
        <title>CCC1 is a transporter that mediates vacuolar iron storage in yeast.</title>
        <authorList>
            <person name="Li L."/>
            <person name="Chen O.S."/>
            <person name="McVey Ward D."/>
            <person name="Kaplan J."/>
        </authorList>
    </citation>
    <scope>FUNCTION</scope>
    <scope>TRANSPORTER ACTIVITY</scope>
    <scope>SUBCELLULAR LOCATION</scope>
    <scope>CHARACTERIZATION OF DELETION MUTANT</scope>
</reference>
<reference key="9">
    <citation type="journal article" date="2003" name="Nature">
        <title>Global analysis of protein localization in budding yeast.</title>
        <authorList>
            <person name="Huh W.-K."/>
            <person name="Falvo J.V."/>
            <person name="Gerke L.C."/>
            <person name="Carroll A.S."/>
            <person name="Howson R.W."/>
            <person name="Weissman J.S."/>
            <person name="O'Shea E.K."/>
        </authorList>
    </citation>
    <scope>SUBCELLULAR LOCATION [LARGE SCALE ANALYSIS]</scope>
</reference>
<reference key="10">
    <citation type="journal article" date="2003" name="Nature">
        <title>Global analysis of protein expression in yeast.</title>
        <authorList>
            <person name="Ghaemmaghami S."/>
            <person name="Huh W.-K."/>
            <person name="Bower K."/>
            <person name="Howson R.W."/>
            <person name="Belle A."/>
            <person name="Dephoure N."/>
            <person name="O'Shea E.K."/>
            <person name="Weissman J.S."/>
        </authorList>
    </citation>
    <scope>LEVEL OF PROTEIN EXPRESSION [LARGE SCALE ANALYSIS]</scope>
</reference>
<reference key="11">
    <citation type="journal article" date="2004" name="J. Biol. Chem.">
        <title>A mitochondrial-vacuolar signaling pathway in yeast that affects iron and copper metabolism.</title>
        <authorList>
            <person name="Li L."/>
            <person name="Kaplan J."/>
        </authorList>
    </citation>
    <scope>CHARACTERIZATION OF DELETION MUTANT</scope>
</reference>
<reference key="12">
    <citation type="journal article" date="2005" name="Cell">
        <title>Coordinated remodeling of cellular metabolism during iron deficiency through targeted mRNA degradation.</title>
        <authorList>
            <person name="Puig S."/>
            <person name="Askeland E."/>
            <person name="Thiele D.J."/>
        </authorList>
    </citation>
    <scope>INDUCTION</scope>
</reference>
<reference key="13">
    <citation type="journal article" date="2006" name="Proc. Natl. Acad. Sci. U.S.A.">
        <title>A global topology map of the Saccharomyces cerevisiae membrane proteome.</title>
        <authorList>
            <person name="Kim H."/>
            <person name="Melen K."/>
            <person name="Oesterberg M."/>
            <person name="von Heijne G."/>
        </authorList>
    </citation>
    <scope>TOPOLOGY [LARGE SCALE ANALYSIS]</scope>
    <source>
        <strain>ATCC 208353 / W303-1A</strain>
    </source>
</reference>
<reference key="14">
    <citation type="journal article" date="2007" name="Genetics">
        <title>Golgi manganese transport is required for rapamycin signaling in Saccharomyces cerevisiae.</title>
        <authorList>
            <person name="Devasahayam G."/>
            <person name="Burke D.J."/>
            <person name="Sturgill T.W."/>
        </authorList>
    </citation>
    <scope>EFFECT OF OVEREXPRESSION</scope>
</reference>
<reference key="15">
    <citation type="journal article" date="2007" name="J. Proteome Res.">
        <title>Large-scale phosphorylation analysis of alpha-factor-arrested Saccharomyces cerevisiae.</title>
        <authorList>
            <person name="Li X."/>
            <person name="Gerber S.A."/>
            <person name="Rudner A.D."/>
            <person name="Beausoleil S.A."/>
            <person name="Haas W."/>
            <person name="Villen J."/>
            <person name="Elias J.E."/>
            <person name="Gygi S.P."/>
        </authorList>
    </citation>
    <scope>PHOSPHORYLATION [LARGE SCALE ANALYSIS] AT SER-83</scope>
    <scope>IDENTIFICATION BY MASS SPECTROMETRY [LARGE SCALE ANALYSIS]</scope>
    <source>
        <strain>ADR376</strain>
    </source>
</reference>
<reference key="16">
    <citation type="journal article" date="2008" name="Mol. Cell. Biol.">
        <title>Yap5 is an iron-responsive transcriptional activator that regulates vacuolar iron storage in yeast.</title>
        <authorList>
            <person name="Li L."/>
            <person name="Bagley D."/>
            <person name="Ward D.M."/>
            <person name="Kaplan J."/>
        </authorList>
    </citation>
    <scope>INDUCTION</scope>
</reference>
<reference key="17">
    <citation type="journal article" date="2008" name="Mol. Cell. Proteomics">
        <title>A multidimensional chromatography technology for in-depth phosphoproteome analysis.</title>
        <authorList>
            <person name="Albuquerque C.P."/>
            <person name="Smolka M.B."/>
            <person name="Payne S.H."/>
            <person name="Bafna V."/>
            <person name="Eng J."/>
            <person name="Zhou H."/>
        </authorList>
    </citation>
    <scope>PHOSPHORYLATION [LARGE SCALE ANALYSIS] AT SER-29; SER-68; SER-71 AND SER-83</scope>
    <scope>IDENTIFICATION BY MASS SPECTROMETRY [LARGE SCALE ANALYSIS]</scope>
</reference>
<reference key="18">
    <citation type="journal article" date="2009" name="Science">
        <title>Global analysis of Cdk1 substrate phosphorylation sites provides insights into evolution.</title>
        <authorList>
            <person name="Holt L.J."/>
            <person name="Tuch B.B."/>
            <person name="Villen J."/>
            <person name="Johnson A.D."/>
            <person name="Gygi S.P."/>
            <person name="Morgan D.O."/>
        </authorList>
    </citation>
    <scope>PHOSPHORYLATION [LARGE SCALE ANALYSIS] AT SER-53; SER-68; SER-71 AND SER-83</scope>
    <scope>IDENTIFICATION BY MASS SPECTROMETRY [LARGE SCALE ANALYSIS]</scope>
</reference>
<gene>
    <name type="primary">CCC1</name>
    <name type="ordered locus">YLR220W</name>
    <name type="ORF">L8083.6</name>
</gene>
<dbReference type="EMBL" id="L24112">
    <property type="protein sequence ID" value="AAA62622.1"/>
    <property type="molecule type" value="mRNA"/>
</dbReference>
<dbReference type="EMBL" id="U14913">
    <property type="protein sequence ID" value="AAB67452.1"/>
    <property type="molecule type" value="Genomic_DNA"/>
</dbReference>
<dbReference type="EMBL" id="U19027">
    <property type="protein sequence ID" value="AAB67409.1"/>
    <property type="molecule type" value="Genomic_DNA"/>
</dbReference>
<dbReference type="EMBL" id="AY557952">
    <property type="protein sequence ID" value="AAS56278.1"/>
    <property type="molecule type" value="Genomic_DNA"/>
</dbReference>
<dbReference type="EMBL" id="BK006945">
    <property type="protein sequence ID" value="DAA09536.1"/>
    <property type="molecule type" value="Genomic_DNA"/>
</dbReference>
<dbReference type="PIR" id="S43453">
    <property type="entry name" value="S43453"/>
</dbReference>
<dbReference type="RefSeq" id="NP_013321.1">
    <property type="nucleotide sequence ID" value="NM_001182107.1"/>
</dbReference>
<dbReference type="SMR" id="P47818"/>
<dbReference type="BioGRID" id="31487">
    <property type="interactions" value="138"/>
</dbReference>
<dbReference type="DIP" id="DIP-782N"/>
<dbReference type="FunCoup" id="P47818">
    <property type="interactions" value="53"/>
</dbReference>
<dbReference type="IntAct" id="P47818">
    <property type="interactions" value="1"/>
</dbReference>
<dbReference type="MINT" id="P47818"/>
<dbReference type="STRING" id="4932.YLR220W"/>
<dbReference type="TCDB" id="2.A.89.1.1">
    <property type="family name" value="the vacuolar iron transporter (vit) family"/>
</dbReference>
<dbReference type="iPTMnet" id="P47818"/>
<dbReference type="PaxDb" id="4932-YLR220W"/>
<dbReference type="PeptideAtlas" id="P47818"/>
<dbReference type="EnsemblFungi" id="YLR220W_mRNA">
    <property type="protein sequence ID" value="YLR220W"/>
    <property type="gene ID" value="YLR220W"/>
</dbReference>
<dbReference type="GeneID" id="850917"/>
<dbReference type="KEGG" id="sce:YLR220W"/>
<dbReference type="AGR" id="SGD:S000004210"/>
<dbReference type="SGD" id="S000004210">
    <property type="gene designation" value="CCC1"/>
</dbReference>
<dbReference type="VEuPathDB" id="FungiDB:YLR220W"/>
<dbReference type="eggNOG" id="KOG4473">
    <property type="taxonomic scope" value="Eukaryota"/>
</dbReference>
<dbReference type="HOGENOM" id="CLU_038957_0_0_1"/>
<dbReference type="InParanoid" id="P47818"/>
<dbReference type="OMA" id="MNFHHTL"/>
<dbReference type="OrthoDB" id="73465at2759"/>
<dbReference type="BioCyc" id="YEAST:G3O-32334-MONOMER"/>
<dbReference type="BioGRID-ORCS" id="850917">
    <property type="hits" value="3 hits in 10 CRISPR screens"/>
</dbReference>
<dbReference type="CD-CODE" id="E03F929F">
    <property type="entry name" value="Stress granule"/>
</dbReference>
<dbReference type="PRO" id="PR:P47818"/>
<dbReference type="Proteomes" id="UP000002311">
    <property type="component" value="Chromosome XII"/>
</dbReference>
<dbReference type="RNAct" id="P47818">
    <property type="molecule type" value="protein"/>
</dbReference>
<dbReference type="GO" id="GO:0000324">
    <property type="term" value="C:fungal-type vacuole"/>
    <property type="evidence" value="ECO:0000314"/>
    <property type="project" value="SGD"/>
</dbReference>
<dbReference type="GO" id="GO:0000329">
    <property type="term" value="C:fungal-type vacuole membrane"/>
    <property type="evidence" value="ECO:0000314"/>
    <property type="project" value="SGD"/>
</dbReference>
<dbReference type="GO" id="GO:0005794">
    <property type="term" value="C:Golgi apparatus"/>
    <property type="evidence" value="ECO:0000314"/>
    <property type="project" value="SGD"/>
</dbReference>
<dbReference type="GO" id="GO:0000139">
    <property type="term" value="C:Golgi membrane"/>
    <property type="evidence" value="ECO:0007669"/>
    <property type="project" value="UniProtKB-SubCell"/>
</dbReference>
<dbReference type="GO" id="GO:0015093">
    <property type="term" value="F:ferrous iron transmembrane transporter activity"/>
    <property type="evidence" value="ECO:0000315"/>
    <property type="project" value="SGD"/>
</dbReference>
<dbReference type="GO" id="GO:0005381">
    <property type="term" value="F:iron ion transmembrane transporter activity"/>
    <property type="evidence" value="ECO:0000318"/>
    <property type="project" value="GO_Central"/>
</dbReference>
<dbReference type="GO" id="GO:0005384">
    <property type="term" value="F:manganese ion transmembrane transporter activity"/>
    <property type="evidence" value="ECO:0000315"/>
    <property type="project" value="SGD"/>
</dbReference>
<dbReference type="GO" id="GO:1990461">
    <property type="term" value="P:detoxification of iron ion"/>
    <property type="evidence" value="ECO:0000315"/>
    <property type="project" value="SGD"/>
</dbReference>
<dbReference type="GO" id="GO:0006874">
    <property type="term" value="P:intracellular calcium ion homeostasis"/>
    <property type="evidence" value="ECO:0000315"/>
    <property type="project" value="SGD"/>
</dbReference>
<dbReference type="GO" id="GO:0006879">
    <property type="term" value="P:intracellular iron ion homeostasis"/>
    <property type="evidence" value="ECO:0000315"/>
    <property type="project" value="SGD"/>
</dbReference>
<dbReference type="GO" id="GO:0030026">
    <property type="term" value="P:intracellular manganese ion homeostasis"/>
    <property type="evidence" value="ECO:0000315"/>
    <property type="project" value="SGD"/>
</dbReference>
<dbReference type="GO" id="GO:0006826">
    <property type="term" value="P:iron ion transport"/>
    <property type="evidence" value="ECO:0000315"/>
    <property type="project" value="SGD"/>
</dbReference>
<dbReference type="GO" id="GO:0006828">
    <property type="term" value="P:manganese ion transport"/>
    <property type="evidence" value="ECO:0000315"/>
    <property type="project" value="SGD"/>
</dbReference>
<dbReference type="CDD" id="cd02435">
    <property type="entry name" value="CCC1"/>
    <property type="match status" value="1"/>
</dbReference>
<dbReference type="InterPro" id="IPR008217">
    <property type="entry name" value="Ccc1_fam"/>
</dbReference>
<dbReference type="PANTHER" id="PTHR31851">
    <property type="entry name" value="FE(2+)/MN(2+) TRANSPORTER PCL1"/>
    <property type="match status" value="1"/>
</dbReference>
<dbReference type="Pfam" id="PF01988">
    <property type="entry name" value="VIT1"/>
    <property type="match status" value="1"/>
</dbReference>
<protein>
    <recommendedName>
        <fullName>Protein CCC1</fullName>
    </recommendedName>
    <alternativeName>
        <fullName>Cross-complementer of CSG1 protein 1</fullName>
    </alternativeName>
</protein>
<accession>P47818</accession>
<accession>D6VYM0</accession>
<organism>
    <name type="scientific">Saccharomyces cerevisiae (strain ATCC 204508 / S288c)</name>
    <name type="common">Baker's yeast</name>
    <dbReference type="NCBI Taxonomy" id="559292"/>
    <lineage>
        <taxon>Eukaryota</taxon>
        <taxon>Fungi</taxon>
        <taxon>Dikarya</taxon>
        <taxon>Ascomycota</taxon>
        <taxon>Saccharomycotina</taxon>
        <taxon>Saccharomycetes</taxon>
        <taxon>Saccharomycetales</taxon>
        <taxon>Saccharomycetaceae</taxon>
        <taxon>Saccharomyces</taxon>
    </lineage>
</organism>
<evidence type="ECO:0000255" key="1"/>
<evidence type="ECO:0000256" key="2">
    <source>
        <dbReference type="SAM" id="MobiDB-lite"/>
    </source>
</evidence>
<evidence type="ECO:0000269" key="3">
    <source>
    </source>
</evidence>
<evidence type="ECO:0000269" key="4">
    <source>
    </source>
</evidence>
<evidence type="ECO:0000269" key="5">
    <source>
    </source>
</evidence>
<evidence type="ECO:0000269" key="6">
    <source>
    </source>
</evidence>
<evidence type="ECO:0000269" key="7">
    <source>
    </source>
</evidence>
<evidence type="ECO:0000269" key="8">
    <source>
    </source>
</evidence>
<evidence type="ECO:0000269" key="9">
    <source>
    </source>
</evidence>
<evidence type="ECO:0000305" key="10"/>
<evidence type="ECO:0007744" key="11">
    <source>
    </source>
</evidence>
<evidence type="ECO:0007744" key="12">
    <source>
    </source>
</evidence>
<evidence type="ECO:0007744" key="13">
    <source>
    </source>
</evidence>
<sequence length="322" mass="34250">MSIVALKNAVVTLIQKAKGSGGTSELGGSESTPLLRGSNSNSSRHDNLSSSSSDIIYGRNSAQDLENSPMSVGKDNRNGDNGSDNEKANLGFFQSVDPRVISDLIIGLSDGLTVPFALTAGLSSLGDAKLVITGGFAELISGAISMGLGGYLGAKSESDYYHAEVKKEKRKFYDNSNLINREIEDILLEINPNFSDETIVSFIKDLQRTPELMVDFIIRYGRGLDEPAENRELISAVTIGGGYLLGGLVPLVPYFFVSDVGTGLIYSIIVMVVTLFWFGYVKTKLSMGSGSSTSKKVTEGVEMVVVGGVAAGAAWFFVKLLG</sequence>
<comment type="function">
    <text evidence="3 8 9">Has a role in both calcium and manganese homeostasis. Involved in the transfer of iron and Mn(2+) from the cytosol to the vacuole for storage of these metals.</text>
</comment>
<comment type="catalytic activity">
    <reaction evidence="3">
        <text>Fe(2+)(in) = Fe(2+)(out)</text>
        <dbReference type="Rhea" id="RHEA:28486"/>
        <dbReference type="ChEBI" id="CHEBI:29033"/>
    </reaction>
    <physiologicalReaction direction="left-to-right" evidence="10">
        <dbReference type="Rhea" id="RHEA:28487"/>
    </physiologicalReaction>
</comment>
<comment type="subcellular location">
    <subcellularLocation>
        <location evidence="3 4 9">Golgi apparatus membrane</location>
    </subcellularLocation>
    <subcellularLocation>
        <location evidence="10">Vacuole membrane</location>
        <topology evidence="10">Multi-pass membrane protein</topology>
    </subcellularLocation>
</comment>
<comment type="induction">
    <text evidence="6 7">Down-regulated under iron starvation by TIS11. Transcriptionally up-regulated by YAP5 in response to increased cytosolic iron.</text>
</comment>
<comment type="disruption phenotype">
    <text evidence="9">Deletion causes an increase in metal sensitivity at 15 mM manganese, but does not affect invertase glycosylation. Deletion shows increased sensitivity to external iron, which is suppressed by MRS3 or MRS4 overexpression requiring oxygen but not respiration, and exacerbated by ectopic expression of the iron transporter FET4. Deletion also results in decreased vacuolar iron content and decreased iron stores, which affect cytosolic iron levels and cell growth. Deletion together with MRS3 and MRS4 restores cellular and mitochondrial iron homeostasis to near normal level, corrects the MRS3 and MRS4 double deletion phenotype (which shows increased resistance to cobalt but decreased resistance to copper and cadmium), and has near normal levels of aconitase activity. When overexpressed, maintains respiratory function in a YFH1 deletion mutant regardless of extracellular iron concentration, activates the iron-dependent transcription factor AFT1 resulting in an increase in iron uptake, cytosolic iron accumulation and a change in copper metabolism. Overexpression prevents excessive mitochondrial iron accumulation by limiting mitochondrial iron uptake and results in increased expression of the high affinity iron transport system composed of FET3 and FTR1. Overexpression also suppresses the rapamycin-resistant phenotype of PMR1 deletion mutant.</text>
</comment>
<comment type="miscellaneous">
    <text evidence="5">Present with 2840 molecules/cell in log phase SD medium.</text>
</comment>
<comment type="similarity">
    <text evidence="10">Belongs to the CCC1 family.</text>
</comment>